<evidence type="ECO:0000269" key="1">
    <source>
    </source>
</evidence>
<evidence type="ECO:0000269" key="2">
    <source>
    </source>
</evidence>
<evidence type="ECO:0000269" key="3">
    <source>
    </source>
</evidence>
<evidence type="ECO:0000269" key="4">
    <source>
    </source>
</evidence>
<evidence type="ECO:0000269" key="5">
    <source>
    </source>
</evidence>
<evidence type="ECO:0000269" key="6">
    <source>
    </source>
</evidence>
<evidence type="ECO:0000269" key="7">
    <source>
    </source>
</evidence>
<evidence type="ECO:0000269" key="8">
    <source>
    </source>
</evidence>
<evidence type="ECO:0000269" key="9">
    <source>
    </source>
</evidence>
<evidence type="ECO:0000269" key="10">
    <source>
    </source>
</evidence>
<evidence type="ECO:0000269" key="11">
    <source>
    </source>
</evidence>
<evidence type="ECO:0000269" key="12">
    <source>
    </source>
</evidence>
<evidence type="ECO:0000269" key="13">
    <source>
    </source>
</evidence>
<evidence type="ECO:0000269" key="14">
    <source>
    </source>
</evidence>
<evidence type="ECO:0000269" key="15">
    <source>
    </source>
</evidence>
<evidence type="ECO:0000305" key="16"/>
<name>E4RF3_ADE02</name>
<dbReference type="EMBL" id="J01917">
    <property type="protein sequence ID" value="AAA92224.1"/>
    <property type="molecule type" value="Genomic_DNA"/>
</dbReference>
<dbReference type="PIR" id="A03807">
    <property type="entry name" value="Q4ADE2"/>
</dbReference>
<dbReference type="RefSeq" id="AP_000194.1">
    <property type="nucleotide sequence ID" value="AC_000007.1"/>
</dbReference>
<dbReference type="RefSeq" id="NP_040534.1">
    <property type="nucleotide sequence ID" value="NC_001405.1"/>
</dbReference>
<dbReference type="SMR" id="P03241"/>
<dbReference type="GeneID" id="2652989"/>
<dbReference type="Proteomes" id="UP000008167">
    <property type="component" value="Segment"/>
</dbReference>
<dbReference type="GO" id="GO:0042025">
    <property type="term" value="C:host cell nucleus"/>
    <property type="evidence" value="ECO:0007669"/>
    <property type="project" value="UniProtKB-SubCell"/>
</dbReference>
<dbReference type="GO" id="GO:0052170">
    <property type="term" value="P:symbiont-mediated suppression of host innate immune response"/>
    <property type="evidence" value="ECO:0007669"/>
    <property type="project" value="UniProtKB-KW"/>
</dbReference>
<dbReference type="Gene3D" id="3.30.70.2870">
    <property type="entry name" value="Mastadenovirus E4 ORF3"/>
    <property type="match status" value="1"/>
</dbReference>
<dbReference type="InterPro" id="IPR009699">
    <property type="entry name" value="Mastadenovirus_E4/Orf3"/>
</dbReference>
<dbReference type="InterPro" id="IPR038368">
    <property type="entry name" value="Mastadenovirus_E4/Orf3_sf"/>
</dbReference>
<dbReference type="Pfam" id="PF06931">
    <property type="entry name" value="Adeno_E4_ORF3"/>
    <property type="match status" value="1"/>
</dbReference>
<organism>
    <name type="scientific">Human adenovirus C serotype 2</name>
    <name type="common">HAdV-2</name>
    <name type="synonym">Human adenovirus 2</name>
    <dbReference type="NCBI Taxonomy" id="10515"/>
    <lineage>
        <taxon>Viruses</taxon>
        <taxon>Varidnaviria</taxon>
        <taxon>Bamfordvirae</taxon>
        <taxon>Preplasmiviricota</taxon>
        <taxon>Tectiliviricetes</taxon>
        <taxon>Rowavirales</taxon>
        <taxon>Adenoviridae</taxon>
        <taxon>Mastadenovirus</taxon>
        <taxon>Human mastadenovirus C</taxon>
    </lineage>
</organism>
<keyword id="KW-0244">Early protein</keyword>
<keyword id="KW-1048">Host nucleus</keyword>
<keyword id="KW-0945">Host-virus interaction</keyword>
<keyword id="KW-1090">Inhibition of host innate immune response by virus</keyword>
<keyword id="KW-1185">Reference proteome</keyword>
<keyword id="KW-0899">Viral immunoevasion</keyword>
<sequence length="116" mass="13255">MIRCLRLKVEGALEQIFTMAGLNIRDLLRDILIRWRDENYLGMVEGAGMFIEEIHPEGFSLYVHLDVRAVCLLEAIVQHLTNAIICSLAVEFDHATGGERVHLIDLHFEVLDNLLE</sequence>
<accession>P03241</accession>
<reference key="1">
    <citation type="journal article" date="1981" name="Nucleic Acids Res.">
        <title>Nucleotide sequence of adenovirus 2 DNA fragment encoding for the carboxylic region of the fiber protein and the entire E4 region.</title>
        <authorList>
            <person name="Herisse J."/>
            <person name="Rigolet M."/>
            <person name="Dupont de Dinechin S."/>
            <person name="Galibert F."/>
        </authorList>
    </citation>
    <scope>NUCLEOTIDE SEQUENCE [GENOMIC DNA]</scope>
</reference>
<reference key="2">
    <citation type="journal article" date="1994" name="Mol. Cell. Biol.">
        <title>Human adenovirus encodes two proteins which have opposite effects on accumulation of alternatively spliced mRNAs.</title>
        <authorList>
            <person name="Nordqvist K."/>
            <person name="Ohman K."/>
            <person name="Akusjarvi G."/>
        </authorList>
    </citation>
    <scope>FUNCTION</scope>
</reference>
<reference key="3">
    <citation type="journal article" date="1995" name="J. Cell Biol.">
        <title>Targeting of adenovirus E1A and E4-ORF3 proteins to nuclear matrix-associated PML bodies.</title>
        <authorList>
            <person name="Carvalho T."/>
            <person name="Seeler J.S."/>
            <person name="Ohman K."/>
            <person name="Jordan P."/>
            <person name="Pettersson U."/>
            <person name="Akusjarvi G."/>
            <person name="Carmo-Fonseca M."/>
            <person name="Dejean A."/>
        </authorList>
    </citation>
    <scope>SUBCELLULAR LOCATION</scope>
</reference>
<reference key="4">
    <citation type="journal article" date="1999" name="J. Gen. Virol.">
        <title>The adenovirus type 5 E1b 55K and E4 Orf3 proteins associate in infected cells and affect ND10 components.</title>
        <authorList>
            <person name="Leppard K.N."/>
            <person name="Everett R.D."/>
        </authorList>
    </citation>
    <scope>INTERACTION WITH E1B-55K PROTEIN</scope>
    <source>
        <strain>Human adenovirus C serotype 5</strain>
    </source>
</reference>
<reference key="5">
    <citation type="journal article" date="2002" name="Nature">
        <title>Adenovirus oncoproteins inactivate the Mre11-Rad50-NBS1 DNA repair complex.</title>
        <authorList>
            <person name="Stracker T.H."/>
            <person name="Carson C.T."/>
            <person name="Weitzman M.D."/>
        </authorList>
    </citation>
    <scope>INTERACTION WITH HOST MRE11/RAD50/NBS1</scope>
    <source>
        <strain>Human adenovirus C serotype 5</strain>
    </source>
</reference>
<reference key="6">
    <citation type="journal article" date="2003" name="J. Virol.">
        <title>Distinct roles of the Adenovirus E4 ORF3 protein in viral DNA replication and inhibition of genome concatenation.</title>
        <authorList>
            <person name="Evans J.D."/>
            <person name="Hearing P."/>
        </authorList>
    </citation>
    <scope>INTERACTION WITH E1B-55K</scope>
    <scope>CREBBP</scope>
    <scope>EP300</scope>
    <scope>PRKDC</scope>
    <source>
        <strain>Human adenovirus C serotype 5</strain>
    </source>
</reference>
<reference key="7">
    <citation type="journal article" date="2005" name="J. Virol.">
        <title>Relocalization of the Mre11-Rad50-Nbs1 complex by the adenovirus E4 ORF3 protein is required for viral replication.</title>
        <authorList>
            <person name="Evans J.D."/>
            <person name="Hearing P."/>
        </authorList>
    </citation>
    <scope>MUTAGENESIS OF ASN-82; LEU-103 AND LEU-106</scope>
    <source>
        <strain>Human adenovirus C serotype 5</strain>
    </source>
</reference>
<reference key="8">
    <citation type="journal article" date="2006" name="J. Virol.">
        <title>Interaction of the adenovirus type 5 E4 Orf3 protein with promyelocytic leukemia protein isoform II is required for ND10 disruption.</title>
        <authorList>
            <person name="Hoppe A."/>
            <person name="Beech S.J."/>
            <person name="Dimmock J."/>
            <person name="Leppard K.N."/>
        </authorList>
    </citation>
    <scope>INTERACTION WITH HOST PML ISOFORM-2</scope>
    <source>
        <strain>Human adenovirus C serotype 5</strain>
    </source>
</reference>
<reference key="9">
    <citation type="journal article" date="2007" name="J. Virol.">
        <title>The adenovirus E4 ORF3 protein binds and reorganizes the TRIM family member transcriptional intermediary factor 1 alpha.</title>
        <authorList>
            <person name="Yondola M.A."/>
            <person name="Hearing P."/>
        </authorList>
    </citation>
    <scope>INTERACTION WITH HOST TRIM24</scope>
    <source>
        <strain>Human adenovirus C serotype 5</strain>
    </source>
</reference>
<reference key="10">
    <citation type="journal article" date="2007" name="J. Virol.">
        <title>Adenovirus E4 ORF3 protein inhibits the interferon-mediated antiviral response.</title>
        <authorList>
            <person name="Ullman A.J."/>
            <person name="Reich N.C."/>
            <person name="Hearing P."/>
        </authorList>
    </citation>
    <scope>FUNCTION</scope>
    <source>
        <strain>Human adenovirus C serotype 5</strain>
    </source>
</reference>
<reference key="11">
    <citation type="journal article" date="2008" name="J. Virol.">
        <title>Cellular proteins PML and Daxx mediate an innate antiviral defense antagonized by the adenovirus E4 ORF3 protein.</title>
        <authorList>
            <person name="Ullman A.J."/>
            <person name="Hearing P."/>
        </authorList>
    </citation>
    <scope>FUNCTION</scope>
    <source>
        <strain>Human adenovirus C serotype 5</strain>
    </source>
</reference>
<reference key="12">
    <citation type="journal article" date="2009" name="J. Gen. Virol.">
        <title>Adenovirus type 5 E4 Orf3 protein targets promyelocytic leukaemia (PML) protein nuclear domains for disruption via a sequence in PML isoform II that is predicted as a protein interaction site by bioinformatic analysis.</title>
        <authorList>
            <person name="Leppard K.N."/>
            <person name="Emmott E."/>
            <person name="Cortese M.S."/>
            <person name="Rich T."/>
        </authorList>
    </citation>
    <scope>INTERACTION WITH HOST PML ISOFORM-2</scope>
    <source>
        <strain>Human adenovirus C serotype 5</strain>
    </source>
</reference>
<reference key="13">
    <citation type="journal article" date="2011" name="Virology">
        <title>The adenovirus E4 11 k protein binds and relocalizes the cytoplasmic P-body component Ddx6 to aggresomes.</title>
        <authorList>
            <person name="Greer A.E."/>
            <person name="Hearing P."/>
            <person name="Ketner G."/>
        </authorList>
    </citation>
    <scope>FUNCTION</scope>
    <source>
        <strain>Human adenovirus C serotype 5</strain>
    </source>
</reference>
<reference key="14">
    <citation type="journal article" date="2012" name="Virology">
        <title>Adenovirus E4-ORF3-dependent relocalization of TIF1alpha and TIF1gamma relies on access to the Coiled-Coil motif.</title>
        <authorList>
            <person name="Vink E.I."/>
            <person name="Yondola M.A."/>
            <person name="Wu K."/>
            <person name="Hearing P."/>
        </authorList>
    </citation>
    <scope>INTERACTION WITH TRIM24</scope>
    <source>
        <strain>Human adenovirus C serotype 5</strain>
    </source>
</reference>
<reference key="15">
    <citation type="journal article" date="2012" name="J. Biol. Chem.">
        <title>Biophysical and functional analyses suggest that adenovirus E4-ORF3 protein requires higher-order multimerization to function against promyelocytic leukemia protein nuclear bodies.</title>
        <authorList>
            <person name="Patsalo V."/>
            <person name="Yondola M.A."/>
            <person name="Luan B."/>
            <person name="Shoshani I."/>
            <person name="Kisker C."/>
            <person name="Green D.F."/>
            <person name="Raleigh D.P."/>
            <person name="Hearing P."/>
        </authorList>
    </citation>
    <scope>SUBUNIT</scope>
    <source>
        <strain>Human adenovirus C serotype 5</strain>
    </source>
</reference>
<reference key="16">
    <citation type="journal article" date="2012" name="Cell">
        <title>A structural basis for the assembly and functions of a viral polymer that inactivates multiple tumor suppressors.</title>
        <authorList>
            <person name="Ou H.D."/>
            <person name="Kwiatkowski W."/>
            <person name="Deerinck T.J."/>
            <person name="Noske A."/>
            <person name="Blain K.Y."/>
            <person name="Land H.S."/>
            <person name="Soria C."/>
            <person name="Powers C.J."/>
            <person name="May A.P."/>
            <person name="Shu X."/>
            <person name="Tsien R.Y."/>
            <person name="Fitzpatrick J.A."/>
            <person name="Long J.A."/>
            <person name="Ellisman M.H."/>
            <person name="Choe S."/>
            <person name="O'Shea C.C."/>
        </authorList>
    </citation>
    <scope>SUBUNIT</scope>
    <scope>SUBCELLULAR LOCATION</scope>
    <source>
        <strain>Human adenovirus C serotype 5</strain>
    </source>
</reference>
<reference key="17">
    <citation type="journal article" date="2005" name="Front. Biosci.">
        <title>Functions of the adenovirus E4 proteins and their impact on viral vectors.</title>
        <authorList>
            <person name="Weitzman M.D."/>
        </authorList>
    </citation>
    <scope>REVIEW</scope>
</reference>
<organismHost>
    <name type="scientific">Homo sapiens</name>
    <name type="common">Human</name>
    <dbReference type="NCBI Taxonomy" id="9606"/>
</organismHost>
<proteinExistence type="evidence at protein level"/>
<feature type="chain" id="PRO_0000221770" description="Early 4 ORF3 protein">
    <location>
        <begin position="1"/>
        <end position="116"/>
    </location>
</feature>
<feature type="mutagenesis site" description="Complete loss of virus replication." evidence="4">
    <original>N</original>
    <variation>A</variation>
    <location>
        <position position="82"/>
    </location>
</feature>
<feature type="mutagenesis site" description="No effect on viral DNA replication.">
    <original>LAV</original>
    <variation>AAA</variation>
    <location>
        <begin position="88"/>
        <end position="90"/>
    </location>
</feature>
<feature type="mutagenesis site" description="Complete loss of virus replication." evidence="4">
    <original>L</original>
    <variation>A</variation>
    <location>
        <position position="103"/>
    </location>
</feature>
<feature type="mutagenesis site" description="Complete loss of viral DNA replication.">
    <original>DL</original>
    <variation>AA</variation>
    <location>
        <begin position="105"/>
        <end position="106"/>
    </location>
</feature>
<feature type="mutagenesis site" description="Complete loss of virus replication." evidence="4">
    <original>L</original>
    <variation>A</variation>
    <location>
        <position position="106"/>
    </location>
</feature>
<feature type="mutagenesis site" description="Complete loss of viral DNA replication.">
    <original>HF</original>
    <variation>AA</variation>
    <location>
        <begin position="107"/>
        <end position="108"/>
    </location>
</feature>
<comment type="function">
    <text evidence="7 8 10 15">Forms a multivalent network in host nucleus that inhibits nuclear bodies and prevents antiviral cellular activities. The network is made of multimerized dimers and surrounds adenovirus replication centers and nucleolus. Plays a role in splicing of the major late transcript. Prevents viral genome concatemer formation.</text>
</comment>
<comment type="subunit">
    <text evidence="1 2 3 5 6 9 11 12 13">Homodimer. Multimerizes through C-terminus tail by reciprocal or nonreciprocal interactions. Interacts with host PML isoform 2 C-terminal disordered region. Interacts with E1B-55k; this interaction is necessary for E1B 55 kDa protein to localize to the nuclear matrix fraction of the cell (PubMed:10211970). May interact with host TRIM24, CREBBP, EP300, PRKDC and the MRN complex MRE11/RAD50/NBS1; these interactions may happen through nuclear bodies complexes.</text>
</comment>
<comment type="subcellular location">
    <subcellularLocation>
        <location evidence="13 14">Host nucleus</location>
    </subcellularLocation>
    <text>forms networks in the nucleus that may surround adenovirus replication centers.</text>
</comment>
<comment type="induction">
    <text>Synthesized early during infection.</text>
</comment>
<comment type="similarity">
    <text evidence="16">Belongs to the adenoviridae E4 ORF3 family.</text>
</comment>
<protein>
    <recommendedName>
        <fullName>Early 4 ORF3 protein</fullName>
        <shortName>E4-ORF3</shortName>
    </recommendedName>
    <alternativeName>
        <fullName>E4 ORF3 control protein</fullName>
    </alternativeName>
    <alternativeName>
        <fullName>Early 4 11 kDa protein</fullName>
        <shortName>E4-11k</shortName>
    </alternativeName>
</protein>